<keyword id="KW-0325">Glycoprotein</keyword>
<keyword id="KW-0349">Heme</keyword>
<keyword id="KW-0408">Iron</keyword>
<keyword id="KW-0472">Membrane</keyword>
<keyword id="KW-0479">Metal-binding</keyword>
<keyword id="KW-0503">Monooxygenase</keyword>
<keyword id="KW-0560">Oxidoreductase</keyword>
<keyword id="KW-0812">Transmembrane</keyword>
<keyword id="KW-1133">Transmembrane helix</keyword>
<name>CYPX_DOTSE</name>
<feature type="chain" id="PRO_0000443461" description="Cytochrome P450 monooxygenase cypX">
    <location>
        <begin position="1"/>
        <end position="511"/>
    </location>
</feature>
<feature type="transmembrane region" description="Helical" evidence="3">
    <location>
        <begin position="18"/>
        <end position="38"/>
    </location>
</feature>
<feature type="binding site" description="axial binding residue" evidence="1">
    <location>
        <position position="454"/>
    </location>
    <ligand>
        <name>heme</name>
        <dbReference type="ChEBI" id="CHEBI:30413"/>
    </ligand>
    <ligandPart>
        <name>Fe</name>
        <dbReference type="ChEBI" id="CHEBI:18248"/>
    </ligandPart>
</feature>
<feature type="glycosylation site" description="N-linked (GlcNAc...) asparagine" evidence="4">
    <location>
        <position position="162"/>
    </location>
</feature>
<feature type="glycosylation site" description="N-linked (GlcNAc...) asparagine" evidence="4">
    <location>
        <position position="407"/>
    </location>
</feature>
<comment type="function">
    <text evidence="2 5 6 10 13 14 15">Cytochrome P450 monooxygenase; part of the fragmented gene cluster that mediates the biosynthesis of dothistromin (DOTH), a polyketide toxin very similar in structure to the aflatoxin precursor, versicolorin B (PubMed:12039746, PubMed:17683963, PubMed:22069571, PubMed:23207690, PubMed:23448391). The first step of the pathway is the conversion of acetate to norsolorinic acid (NOR) and requires the fatty acid synthase subunits hexA and hexB, as well as the polyketide synthase pksA (PubMed:16649078, PubMed:23207690). PksA combines a hexanoyl starter unit and 7 malonyl-CoA extender units to synthesize the precursor NOR (By similarity). The hexanoyl starter unit is provided to the acyl-carrier protein (ACP) domain by the fungal fatty acid synthase hexA/hexB (By similarity). The second step is the conversion of NOR to averantin (AVN) and requires the norsolorinic acid ketoreductase nor1, which catalyzes the dehydration of norsolorinic acid to form (1'S)-averantin (PubMed:23207690). The cytochrome P450 monooxygenase avnA then catalyzes the hydroxylation of AVN to 5'hydroxyaverantin (HAVN) (PubMed:23207690). The next step is performed by adhA that transforms HAVN to averufin (AVF) (PubMed:23207690). Averufin might then be converted to hydroxyversicolorone by cypX and avfA (PubMed:23207690). Hydroxyversicolorone is further converted versiconal hemiacetal acetate (VHA) by moxY (PubMed:23207690). VHA is then the substrate for the versiconal hemiacetal acetate esterase est1 to yield versiconal (VAL) (PubMed:23207690). Versicolorin B synthase vbsA then converts VAL to versicolorin B (VERB) by closing the bisfuran ring (PubMed:16649078, PubMed:23207690). Then, the activity of the versicolorin B desaturase verB leads to versicolorin A (VERA) (PubMed:23207690). DotB, a predicted chloroperoxidase, may perform epoxidation of the A-ring of VERA (PubMed:23207690). Alternatively, a cytochrome P450, such as cypX or avnA could catalyze this step (PubMed:23207690). It is also possible that another, uncharacterized, cytochrome P450 enzyme is responsible for this step (PubMed:23207690). Opening of the epoxide could potentially be achieved by the epoxide hydrolase epoA (PubMed:23207690). However, epoA seems not to be required for DOTH biosynthesis, but other epoxide hydrolases may have the ability to complement this hydrolysis (PubMed:23207690). Alternatively, opening of the epoxide ring could be achieved non-enzymatically (PubMed:23207690). The next step is the deoxygenation of ring A to yield the 5,8-dihydroxyanthraquinone which is most likely catalyzed by the NADPH dehydrogenase encoded by ver1 (PubMed:23207690). The last stages of DOTH biosynthesis are proposed to involve hydroxylation of the bisfuran (PubMed:23207690). OrdB and norB might have oxidative roles here (PubMed:23207690). An alternative possibility is that cytochrome P450 monoogenases such as avnA and cypX might perform these steps in addition to previously proposed steps (PubMed:23207690).</text>
</comment>
<comment type="cofactor">
    <cofactor evidence="1">
        <name>heme</name>
        <dbReference type="ChEBI" id="CHEBI:30413"/>
    </cofactor>
</comment>
<comment type="pathway">
    <text evidence="10 14">Mycotoxin biosynthesis.</text>
</comment>
<comment type="subcellular location">
    <subcellularLocation>
        <location evidence="3">Membrane</location>
        <topology evidence="3">Single-pass membrane protein</topology>
    </subcellularLocation>
</comment>
<comment type="induction">
    <text evidence="7 8">Expression is positively regulated by the dothistromin-specific transcription factor aflR (PubMed:23207690). Dothistromin biosynthetic proteins are co-regulated, showing a high level of expression at ealy exponential phase with a subsequent decline in older cultures (PubMed:17683963).</text>
</comment>
<comment type="similarity">
    <text evidence="12">Belongs to the cytochrome P450 family.</text>
</comment>
<gene>
    <name evidence="11" type="primary">cypX</name>
    <name evidence="9" type="synonym">cypA</name>
</gene>
<sequence length="511" mass="56700">MAGELYKWIMDATAGAPLPFSLALVAAAFVLYNIVSIITTAYFSPLSKIPGPWYAKLTDLRLTYSVFAGNRIYYVDSLHQKYGPMVRIGPKEVDVADPAAAREVHRMGTVFTKAPFYRLLSPGPVDNIFNFRDQKKHSQRRKLYAKGFTLVELRKNWESTINKTISMAVQKMKEEAANGDTELMGWWTLMANEIVCRLTFNGGHGTVEKGIKDPFVLMLEKRKGDLAHLLKMFIPPLYYVGRVLGKVNTRMNDIFYSQEKMFKAGAGVVKSARQDKEAGEFNQNLFAKALQEGEGDAATLTDTDIITDAGALLLAGSDPTAISLTFLIYLVLSRPELQKQLEEEVASIDGEVTDTVCEGLPLMNAIIDESMRLYGAAPGGLPRSPPAGGANLGGYYIPEGTVVDTQNWTLHTDGATWKEAQTFDHTRFLPENRLEFSEKQKMAFNPFGQGSRQCLGIHLGRLEMRLAVAHFFRELRGVKLAKSATPESMAVVDSFVAGVPRDRRCEVTMKA</sequence>
<protein>
    <recommendedName>
        <fullName evidence="11">Cytochrome P450 monooxygenase cypX</fullName>
        <ecNumber evidence="14">1.-.-.-</ecNumber>
    </recommendedName>
    <alternativeName>
        <fullName evidence="11">Dothistromin biosynthesis protein cypX</fullName>
    </alternativeName>
</protein>
<evidence type="ECO:0000250" key="1">
    <source>
        <dbReference type="UniProtKB" id="P04798"/>
    </source>
</evidence>
<evidence type="ECO:0000250" key="2">
    <source>
        <dbReference type="UniProtKB" id="Q6UEF4"/>
    </source>
</evidence>
<evidence type="ECO:0000255" key="3"/>
<evidence type="ECO:0000255" key="4">
    <source>
        <dbReference type="PROSITE-ProRule" id="PRU00498"/>
    </source>
</evidence>
<evidence type="ECO:0000269" key="5">
    <source>
    </source>
</evidence>
<evidence type="ECO:0000269" key="6">
    <source>
    </source>
</evidence>
<evidence type="ECO:0000269" key="7">
    <source>
    </source>
</evidence>
<evidence type="ECO:0000269" key="8">
    <source>
    </source>
</evidence>
<evidence type="ECO:0000303" key="9">
    <source>
    </source>
</evidence>
<evidence type="ECO:0000303" key="10">
    <source>
    </source>
</evidence>
<evidence type="ECO:0000303" key="11">
    <source>
    </source>
</evidence>
<evidence type="ECO:0000305" key="12"/>
<evidence type="ECO:0000305" key="13">
    <source>
    </source>
</evidence>
<evidence type="ECO:0000305" key="14">
    <source>
    </source>
</evidence>
<evidence type="ECO:0000305" key="15">
    <source>
    </source>
</evidence>
<accession>Q30DW6</accession>
<reference key="1">
    <citation type="journal article" date="2006" name="Mycopathologia">
        <title>A polyketide synthase gene required for biosynthesis of the aflatoxin-like toxin, dothistromin.</title>
        <authorList>
            <person name="Bradshaw R.E."/>
            <person name="Jin H."/>
            <person name="Morgan B.S."/>
            <person name="Schwelm A."/>
            <person name="Teddy O.R."/>
            <person name="Young C.A."/>
            <person name="Zhang S."/>
        </authorList>
    </citation>
    <scope>NUCLEOTIDE SEQUENCE [GENOMIC DNA]</scope>
    <scope>FUNCTION</scope>
    <source>
        <strain>NZE7</strain>
    </source>
</reference>
<reference key="2">
    <citation type="journal article" date="2007" name="Fungal Genet. Biol.">
        <title>A fragmented aflatoxin-like gene cluster in the forest pathogen Dothistroma septosporum.</title>
        <authorList>
            <person name="Zhang S."/>
            <person name="Schwelm A."/>
            <person name="Jin H."/>
            <person name="Collins L.J."/>
            <person name="Bradshaw R.E."/>
        </authorList>
    </citation>
    <scope>NUCLEOTIDE SEQUENCE [GENOMIC DNA]</scope>
    <scope>FUNCTION</scope>
    <scope>INDUCTION</scope>
    <source>
        <strain>NZE7</strain>
    </source>
</reference>
<reference key="3">
    <citation type="submission" date="2010-07" db="EMBL/GenBank/DDBJ databases">
        <authorList>
            <person name="Zhang S."/>
            <person name="Bradshaw R.E."/>
        </authorList>
    </citation>
    <scope>NUCLEOTIDE SEQUENCE [GENOMIC DNA]</scope>
    <source>
        <strain>NZE1 / ATCC MYA-605</strain>
    </source>
</reference>
<reference key="4">
    <citation type="journal article" date="2002" name="Appl. Environ. Microbiol.">
        <title>Dothistroma pini, a forest pathogen, contains homologs of aflatoxin biosynthetic pathway genes.</title>
        <authorList>
            <person name="Bradshaw R.E."/>
            <person name="Bhatnagar D."/>
            <person name="Ganley R.J."/>
            <person name="Gillman C.J."/>
            <person name="Monahan B.J."/>
            <person name="Seconi J.M."/>
        </authorList>
    </citation>
    <scope>FUNCTION</scope>
</reference>
<reference key="5">
    <citation type="journal article" date="2010" name="Toxins">
        <title>Genetics of dothistromin biosynthesis of Dothistroma septosporum: an update.</title>
        <authorList>
            <person name="Schwelm A."/>
            <person name="Bradshaw R.E."/>
        </authorList>
    </citation>
    <scope>REVIEW ON FUNCTION</scope>
    <scope>PATHWAY</scope>
</reference>
<reference key="6">
    <citation type="journal article" date="2013" name="Fungal Genet. Biol.">
        <title>Dothistromin genes at multiple separate loci are regulated by AflR.</title>
        <authorList>
            <person name="Chettri P."/>
            <person name="Ehrlich K.C."/>
            <person name="Cary J.W."/>
            <person name="Collemare J."/>
            <person name="Cox M.P."/>
            <person name="Griffiths S.A."/>
            <person name="Olson M.A."/>
            <person name="de Wit P.J."/>
            <person name="Bradshaw R.E."/>
        </authorList>
    </citation>
    <scope>FUNCTION</scope>
    <scope>INDUCTION</scope>
    <scope>PATHWAY</scope>
</reference>
<reference key="7">
    <citation type="journal article" date="2013" name="New Phytol.">
        <title>Fragmentation of an aflatoxin-like gene cluster in a forest pathogen.</title>
        <authorList>
            <person name="Bradshaw R.E."/>
            <person name="Slot J.C."/>
            <person name="Moore G.G."/>
            <person name="Chettri P."/>
            <person name="de Wit P.J."/>
            <person name="Ehrlich K.C."/>
            <person name="Ganley A.R."/>
            <person name="Olson M.A."/>
            <person name="Rokas A."/>
            <person name="Carbone I."/>
            <person name="Cox M.P."/>
        </authorList>
    </citation>
    <scope>FUNCTION</scope>
</reference>
<proteinExistence type="evidence at transcript level"/>
<organism>
    <name type="scientific">Dothistroma septosporum</name>
    <name type="common">Red band needle blight fungus</name>
    <name type="synonym">Mycosphaerella pini</name>
    <dbReference type="NCBI Taxonomy" id="64363"/>
    <lineage>
        <taxon>Eukaryota</taxon>
        <taxon>Fungi</taxon>
        <taxon>Dikarya</taxon>
        <taxon>Ascomycota</taxon>
        <taxon>Pezizomycotina</taxon>
        <taxon>Dothideomycetes</taxon>
        <taxon>Dothideomycetidae</taxon>
        <taxon>Mycosphaerellales</taxon>
        <taxon>Mycosphaerellaceae</taxon>
        <taxon>Dothistroma</taxon>
    </lineage>
</organism>
<dbReference type="EC" id="1.-.-.-" evidence="14"/>
<dbReference type="EMBL" id="DQ149246">
    <property type="protein sequence ID" value="AAZ95016.1"/>
    <property type="molecule type" value="Genomic_DNA"/>
</dbReference>
<dbReference type="SMR" id="Q30DW6"/>
<dbReference type="GlyCosmos" id="Q30DW6">
    <property type="glycosylation" value="2 sites, No reported glycans"/>
</dbReference>
<dbReference type="OMA" id="WTLMANE"/>
<dbReference type="GO" id="GO:0016020">
    <property type="term" value="C:membrane"/>
    <property type="evidence" value="ECO:0007669"/>
    <property type="project" value="UniProtKB-SubCell"/>
</dbReference>
<dbReference type="GO" id="GO:0020037">
    <property type="term" value="F:heme binding"/>
    <property type="evidence" value="ECO:0007669"/>
    <property type="project" value="InterPro"/>
</dbReference>
<dbReference type="GO" id="GO:0005506">
    <property type="term" value="F:iron ion binding"/>
    <property type="evidence" value="ECO:0007669"/>
    <property type="project" value="InterPro"/>
</dbReference>
<dbReference type="GO" id="GO:0004497">
    <property type="term" value="F:monooxygenase activity"/>
    <property type="evidence" value="ECO:0007669"/>
    <property type="project" value="UniProtKB-KW"/>
</dbReference>
<dbReference type="GO" id="GO:0016705">
    <property type="term" value="F:oxidoreductase activity, acting on paired donors, with incorporation or reduction of molecular oxygen"/>
    <property type="evidence" value="ECO:0007669"/>
    <property type="project" value="InterPro"/>
</dbReference>
<dbReference type="CDD" id="cd11059">
    <property type="entry name" value="CYP_fungal"/>
    <property type="match status" value="1"/>
</dbReference>
<dbReference type="Gene3D" id="1.10.630.10">
    <property type="entry name" value="Cytochrome P450"/>
    <property type="match status" value="1"/>
</dbReference>
<dbReference type="InterPro" id="IPR001128">
    <property type="entry name" value="Cyt_P450"/>
</dbReference>
<dbReference type="InterPro" id="IPR017972">
    <property type="entry name" value="Cyt_P450_CS"/>
</dbReference>
<dbReference type="InterPro" id="IPR002401">
    <property type="entry name" value="Cyt_P450_E_grp-I"/>
</dbReference>
<dbReference type="InterPro" id="IPR036396">
    <property type="entry name" value="Cyt_P450_sf"/>
</dbReference>
<dbReference type="InterPro" id="IPR050121">
    <property type="entry name" value="Cytochrome_P450_monoxygenase"/>
</dbReference>
<dbReference type="PANTHER" id="PTHR24305">
    <property type="entry name" value="CYTOCHROME P450"/>
    <property type="match status" value="1"/>
</dbReference>
<dbReference type="PANTHER" id="PTHR24305:SF96">
    <property type="entry name" value="CYTOCHROME P450 MONOOXYGENASE STCB-RELATED"/>
    <property type="match status" value="1"/>
</dbReference>
<dbReference type="Pfam" id="PF00067">
    <property type="entry name" value="p450"/>
    <property type="match status" value="1"/>
</dbReference>
<dbReference type="PRINTS" id="PR00463">
    <property type="entry name" value="EP450I"/>
</dbReference>
<dbReference type="PRINTS" id="PR00385">
    <property type="entry name" value="P450"/>
</dbReference>
<dbReference type="SUPFAM" id="SSF48264">
    <property type="entry name" value="Cytochrome P450"/>
    <property type="match status" value="1"/>
</dbReference>
<dbReference type="PROSITE" id="PS00086">
    <property type="entry name" value="CYTOCHROME_P450"/>
    <property type="match status" value="1"/>
</dbReference>